<accession>Q8ZC94</accession>
<accession>Q0WCF7</accession>
<dbReference type="EC" id="2.4.2.7" evidence="1"/>
<dbReference type="EMBL" id="AL590842">
    <property type="protein sequence ID" value="CAL21719.1"/>
    <property type="molecule type" value="Genomic_DNA"/>
</dbReference>
<dbReference type="EMBL" id="AE009952">
    <property type="protein sequence ID" value="AAM84640.1"/>
    <property type="molecule type" value="Genomic_DNA"/>
</dbReference>
<dbReference type="EMBL" id="AE017042">
    <property type="protein sequence ID" value="AAS61071.1"/>
    <property type="molecule type" value="Genomic_DNA"/>
</dbReference>
<dbReference type="PIR" id="AD0379">
    <property type="entry name" value="AD0379"/>
</dbReference>
<dbReference type="RefSeq" id="WP_002208606.1">
    <property type="nucleotide sequence ID" value="NZ_WUCM01000009.1"/>
</dbReference>
<dbReference type="RefSeq" id="YP_002348031.1">
    <property type="nucleotide sequence ID" value="NC_003143.1"/>
</dbReference>
<dbReference type="SMR" id="Q8ZC94"/>
<dbReference type="STRING" id="214092.YPO3123"/>
<dbReference type="PaxDb" id="214092-YPO3123"/>
<dbReference type="DNASU" id="1146006"/>
<dbReference type="EnsemblBacteria" id="AAS61071">
    <property type="protein sequence ID" value="AAS61071"/>
    <property type="gene ID" value="YP_0806"/>
</dbReference>
<dbReference type="GeneID" id="57975588"/>
<dbReference type="KEGG" id="ype:YPO3123"/>
<dbReference type="KEGG" id="ypk:y1059"/>
<dbReference type="KEGG" id="ypm:YP_0806"/>
<dbReference type="PATRIC" id="fig|214092.21.peg.3579"/>
<dbReference type="eggNOG" id="COG0503">
    <property type="taxonomic scope" value="Bacteria"/>
</dbReference>
<dbReference type="HOGENOM" id="CLU_063339_3_0_6"/>
<dbReference type="OMA" id="QAYDLEY"/>
<dbReference type="OrthoDB" id="9803963at2"/>
<dbReference type="UniPathway" id="UPA00588">
    <property type="reaction ID" value="UER00646"/>
</dbReference>
<dbReference type="Proteomes" id="UP000000815">
    <property type="component" value="Chromosome"/>
</dbReference>
<dbReference type="Proteomes" id="UP000001019">
    <property type="component" value="Chromosome"/>
</dbReference>
<dbReference type="Proteomes" id="UP000002490">
    <property type="component" value="Chromosome"/>
</dbReference>
<dbReference type="GO" id="GO:0005737">
    <property type="term" value="C:cytoplasm"/>
    <property type="evidence" value="ECO:0000318"/>
    <property type="project" value="GO_Central"/>
</dbReference>
<dbReference type="GO" id="GO:0002055">
    <property type="term" value="F:adenine binding"/>
    <property type="evidence" value="ECO:0000318"/>
    <property type="project" value="GO_Central"/>
</dbReference>
<dbReference type="GO" id="GO:0003999">
    <property type="term" value="F:adenine phosphoribosyltransferase activity"/>
    <property type="evidence" value="ECO:0000318"/>
    <property type="project" value="GO_Central"/>
</dbReference>
<dbReference type="GO" id="GO:0016208">
    <property type="term" value="F:AMP binding"/>
    <property type="evidence" value="ECO:0000318"/>
    <property type="project" value="GO_Central"/>
</dbReference>
<dbReference type="GO" id="GO:0006168">
    <property type="term" value="P:adenine salvage"/>
    <property type="evidence" value="ECO:0000318"/>
    <property type="project" value="GO_Central"/>
</dbReference>
<dbReference type="GO" id="GO:0044209">
    <property type="term" value="P:AMP salvage"/>
    <property type="evidence" value="ECO:0000318"/>
    <property type="project" value="GO_Central"/>
</dbReference>
<dbReference type="GO" id="GO:0006166">
    <property type="term" value="P:purine ribonucleoside salvage"/>
    <property type="evidence" value="ECO:0007669"/>
    <property type="project" value="UniProtKB-KW"/>
</dbReference>
<dbReference type="CDD" id="cd06223">
    <property type="entry name" value="PRTases_typeI"/>
    <property type="match status" value="1"/>
</dbReference>
<dbReference type="FunFam" id="3.40.50.2020:FF:000004">
    <property type="entry name" value="Adenine phosphoribosyltransferase"/>
    <property type="match status" value="1"/>
</dbReference>
<dbReference type="Gene3D" id="3.40.50.2020">
    <property type="match status" value="1"/>
</dbReference>
<dbReference type="HAMAP" id="MF_00004">
    <property type="entry name" value="Aden_phosphoribosyltr"/>
    <property type="match status" value="1"/>
</dbReference>
<dbReference type="InterPro" id="IPR005764">
    <property type="entry name" value="Ade_phspho_trans"/>
</dbReference>
<dbReference type="InterPro" id="IPR050120">
    <property type="entry name" value="Adenine_PRTase"/>
</dbReference>
<dbReference type="InterPro" id="IPR000836">
    <property type="entry name" value="PRibTrfase_dom"/>
</dbReference>
<dbReference type="InterPro" id="IPR029057">
    <property type="entry name" value="PRTase-like"/>
</dbReference>
<dbReference type="NCBIfam" id="TIGR01090">
    <property type="entry name" value="apt"/>
    <property type="match status" value="1"/>
</dbReference>
<dbReference type="NCBIfam" id="NF002632">
    <property type="entry name" value="PRK02304.1-1"/>
    <property type="match status" value="1"/>
</dbReference>
<dbReference type="NCBIfam" id="NF002633">
    <property type="entry name" value="PRK02304.1-2"/>
    <property type="match status" value="1"/>
</dbReference>
<dbReference type="NCBIfam" id="NF002634">
    <property type="entry name" value="PRK02304.1-3"/>
    <property type="match status" value="1"/>
</dbReference>
<dbReference type="NCBIfam" id="NF002636">
    <property type="entry name" value="PRK02304.1-5"/>
    <property type="match status" value="1"/>
</dbReference>
<dbReference type="PANTHER" id="PTHR11776">
    <property type="entry name" value="ADENINE PHOSPHORIBOSYLTRANSFERASE"/>
    <property type="match status" value="1"/>
</dbReference>
<dbReference type="PANTHER" id="PTHR11776:SF7">
    <property type="entry name" value="PHOSPHORIBOSYLTRANSFERASE DOMAIN-CONTAINING PROTEIN"/>
    <property type="match status" value="1"/>
</dbReference>
<dbReference type="Pfam" id="PF00156">
    <property type="entry name" value="Pribosyltran"/>
    <property type="match status" value="1"/>
</dbReference>
<dbReference type="SUPFAM" id="SSF53271">
    <property type="entry name" value="PRTase-like"/>
    <property type="match status" value="1"/>
</dbReference>
<dbReference type="PROSITE" id="PS00103">
    <property type="entry name" value="PUR_PYR_PR_TRANSFER"/>
    <property type="match status" value="1"/>
</dbReference>
<protein>
    <recommendedName>
        <fullName evidence="1">Adenine phosphoribosyltransferase</fullName>
        <shortName evidence="1">APRT</shortName>
        <ecNumber evidence="1">2.4.2.7</ecNumber>
    </recommendedName>
</protein>
<proteinExistence type="inferred from homology"/>
<organism>
    <name type="scientific">Yersinia pestis</name>
    <dbReference type="NCBI Taxonomy" id="632"/>
    <lineage>
        <taxon>Bacteria</taxon>
        <taxon>Pseudomonadati</taxon>
        <taxon>Pseudomonadota</taxon>
        <taxon>Gammaproteobacteria</taxon>
        <taxon>Enterobacterales</taxon>
        <taxon>Yersiniaceae</taxon>
        <taxon>Yersinia</taxon>
    </lineage>
</organism>
<name>APT_YERPE</name>
<gene>
    <name evidence="1" type="primary">apt</name>
    <name type="ordered locus">YPO3123</name>
    <name type="ordered locus">y1059</name>
    <name type="ordered locus">YP_0806</name>
</gene>
<feature type="chain" id="PRO_0000149492" description="Adenine phosphoribosyltransferase">
    <location>
        <begin position="1"/>
        <end position="187"/>
    </location>
</feature>
<keyword id="KW-0963">Cytoplasm</keyword>
<keyword id="KW-0328">Glycosyltransferase</keyword>
<keyword id="KW-0660">Purine salvage</keyword>
<keyword id="KW-1185">Reference proteome</keyword>
<keyword id="KW-0808">Transferase</keyword>
<evidence type="ECO:0000255" key="1">
    <source>
        <dbReference type="HAMAP-Rule" id="MF_00004"/>
    </source>
</evidence>
<sequence>MTVSASKTAQQLKYIKDSIKTIPDYPKAGILFRDVTSLLENPKAYSASIKLLSEHYSESGVTKVVGTEARGFLFGAPVALALGVGFVPVRKPGKLPRETISESYELEYGTDTLEIHTDSIQPGDKVLVVDDLLATGGTIEATVKLIRRLGGEVVHAAFIINLPELGGEARLTQQGIHCYSLVSFDGH</sequence>
<reference key="1">
    <citation type="journal article" date="2001" name="Nature">
        <title>Genome sequence of Yersinia pestis, the causative agent of plague.</title>
        <authorList>
            <person name="Parkhill J."/>
            <person name="Wren B.W."/>
            <person name="Thomson N.R."/>
            <person name="Titball R.W."/>
            <person name="Holden M.T.G."/>
            <person name="Prentice M.B."/>
            <person name="Sebaihia M."/>
            <person name="James K.D."/>
            <person name="Churcher C.M."/>
            <person name="Mungall K.L."/>
            <person name="Baker S."/>
            <person name="Basham D."/>
            <person name="Bentley S.D."/>
            <person name="Brooks K."/>
            <person name="Cerdeno-Tarraga A.-M."/>
            <person name="Chillingworth T."/>
            <person name="Cronin A."/>
            <person name="Davies R.M."/>
            <person name="Davis P."/>
            <person name="Dougan G."/>
            <person name="Feltwell T."/>
            <person name="Hamlin N."/>
            <person name="Holroyd S."/>
            <person name="Jagels K."/>
            <person name="Karlyshev A.V."/>
            <person name="Leather S."/>
            <person name="Moule S."/>
            <person name="Oyston P.C.F."/>
            <person name="Quail M.A."/>
            <person name="Rutherford K.M."/>
            <person name="Simmonds M."/>
            <person name="Skelton J."/>
            <person name="Stevens K."/>
            <person name="Whitehead S."/>
            <person name="Barrell B.G."/>
        </authorList>
    </citation>
    <scope>NUCLEOTIDE SEQUENCE [LARGE SCALE GENOMIC DNA]</scope>
    <source>
        <strain>CO-92 / Biovar Orientalis</strain>
    </source>
</reference>
<reference key="2">
    <citation type="journal article" date="2002" name="J. Bacteriol.">
        <title>Genome sequence of Yersinia pestis KIM.</title>
        <authorList>
            <person name="Deng W."/>
            <person name="Burland V."/>
            <person name="Plunkett G. III"/>
            <person name="Boutin A."/>
            <person name="Mayhew G.F."/>
            <person name="Liss P."/>
            <person name="Perna N.T."/>
            <person name="Rose D.J."/>
            <person name="Mau B."/>
            <person name="Zhou S."/>
            <person name="Schwartz D.C."/>
            <person name="Fetherston J.D."/>
            <person name="Lindler L.E."/>
            <person name="Brubaker R.R."/>
            <person name="Plano G.V."/>
            <person name="Straley S.C."/>
            <person name="McDonough K.A."/>
            <person name="Nilles M.L."/>
            <person name="Matson J.S."/>
            <person name="Blattner F.R."/>
            <person name="Perry R.D."/>
        </authorList>
    </citation>
    <scope>NUCLEOTIDE SEQUENCE [LARGE SCALE GENOMIC DNA]</scope>
    <source>
        <strain>KIM10+ / Biovar Mediaevalis</strain>
    </source>
</reference>
<reference key="3">
    <citation type="journal article" date="2004" name="DNA Res.">
        <title>Complete genome sequence of Yersinia pestis strain 91001, an isolate avirulent to humans.</title>
        <authorList>
            <person name="Song Y."/>
            <person name="Tong Z."/>
            <person name="Wang J."/>
            <person name="Wang L."/>
            <person name="Guo Z."/>
            <person name="Han Y."/>
            <person name="Zhang J."/>
            <person name="Pei D."/>
            <person name="Zhou D."/>
            <person name="Qin H."/>
            <person name="Pang X."/>
            <person name="Han Y."/>
            <person name="Zhai J."/>
            <person name="Li M."/>
            <person name="Cui B."/>
            <person name="Qi Z."/>
            <person name="Jin L."/>
            <person name="Dai R."/>
            <person name="Chen F."/>
            <person name="Li S."/>
            <person name="Ye C."/>
            <person name="Du Z."/>
            <person name="Lin W."/>
            <person name="Wang J."/>
            <person name="Yu J."/>
            <person name="Yang H."/>
            <person name="Wang J."/>
            <person name="Huang P."/>
            <person name="Yang R."/>
        </authorList>
    </citation>
    <scope>NUCLEOTIDE SEQUENCE [LARGE SCALE GENOMIC DNA]</scope>
    <source>
        <strain>91001 / Biovar Mediaevalis</strain>
    </source>
</reference>
<comment type="function">
    <text evidence="1">Catalyzes a salvage reaction resulting in the formation of AMP, that is energically less costly than de novo synthesis.</text>
</comment>
<comment type="catalytic activity">
    <reaction evidence="1">
        <text>AMP + diphosphate = 5-phospho-alpha-D-ribose 1-diphosphate + adenine</text>
        <dbReference type="Rhea" id="RHEA:16609"/>
        <dbReference type="ChEBI" id="CHEBI:16708"/>
        <dbReference type="ChEBI" id="CHEBI:33019"/>
        <dbReference type="ChEBI" id="CHEBI:58017"/>
        <dbReference type="ChEBI" id="CHEBI:456215"/>
        <dbReference type="EC" id="2.4.2.7"/>
    </reaction>
</comment>
<comment type="pathway">
    <text evidence="1">Purine metabolism; AMP biosynthesis via salvage pathway; AMP from adenine: step 1/1.</text>
</comment>
<comment type="subunit">
    <text evidence="1">Homodimer.</text>
</comment>
<comment type="subcellular location">
    <subcellularLocation>
        <location evidence="1">Cytoplasm</location>
    </subcellularLocation>
</comment>
<comment type="similarity">
    <text evidence="1">Belongs to the purine/pyrimidine phosphoribosyltransferase family.</text>
</comment>